<feature type="chain" id="PRO_0000216725" description="15,16-dihydrobiliverdin:ferredoxin oxidoreductase">
    <location>
        <begin position="1"/>
        <end position="244"/>
    </location>
</feature>
<protein>
    <recommendedName>
        <fullName>15,16-dihydrobiliverdin:ferredoxin oxidoreductase</fullName>
        <ecNumber>1.3.7.2</ecNumber>
    </recommendedName>
</protein>
<reference key="1">
    <citation type="journal article" date="2001" name="Plant Cell">
        <title>Functional genomic analysis of the HY2 family of ferredoxin-dependent bilin reductases from oxygenic photosynthetic organisms.</title>
        <authorList>
            <person name="Frankenberg N."/>
            <person name="Mukougawa K."/>
            <person name="Kohchi T."/>
            <person name="Lagarias J.C."/>
        </authorList>
    </citation>
    <scope>NUCLEOTIDE SEQUENCE [GENOMIC DNA]</scope>
</reference>
<reference key="2">
    <citation type="journal article" date="2013" name="Plant Physiol.">
        <title>A Nostoc punctiforme Sugar Transporter Necessary to Establish a Cyanobacterium-Plant Symbiosis.</title>
        <authorList>
            <person name="Ekman M."/>
            <person name="Picossi S."/>
            <person name="Campbell E.L."/>
            <person name="Meeks J.C."/>
            <person name="Flores E."/>
        </authorList>
    </citation>
    <scope>NUCLEOTIDE SEQUENCE [LARGE SCALE GENOMIC DNA]</scope>
    <source>
        <strain>ATCC 29133 / PCC 73102</strain>
    </source>
</reference>
<accession>Q93TL6</accession>
<accession>B2J9I3</accession>
<comment type="function">
    <text>Catalyzes the two-electron reduction of biliverdin IX-alpha at the C15 methine bridge.</text>
</comment>
<comment type="catalytic activity">
    <reaction>
        <text>15,16-dihydrobiliverdin + oxidized 2[4Fe-4S]-[ferredoxin] = biliverdin IXalpha + reduced 2[4Fe-4S]-[ferredoxin] + 2 H(+)</text>
        <dbReference type="Rhea" id="RHEA:10168"/>
        <dbReference type="Rhea" id="RHEA-COMP:10002"/>
        <dbReference type="Rhea" id="RHEA-COMP:10004"/>
        <dbReference type="ChEBI" id="CHEBI:15378"/>
        <dbReference type="ChEBI" id="CHEBI:33722"/>
        <dbReference type="ChEBI" id="CHEBI:33723"/>
        <dbReference type="ChEBI" id="CHEBI:57899"/>
        <dbReference type="ChEBI" id="CHEBI:57991"/>
        <dbReference type="EC" id="1.3.7.2"/>
    </reaction>
</comment>
<comment type="similarity">
    <text evidence="1">Belongs to the HY2 family.</text>
</comment>
<comment type="sequence caution" evidence="1">
    <conflict type="erroneous initiation">
        <sequence resource="EMBL-CDS" id="AAK38598"/>
    </conflict>
</comment>
<comment type="sequence caution" evidence="1">
    <conflict type="erroneous initiation">
        <sequence resource="EMBL-CDS" id="ACC79482"/>
    </conflict>
</comment>
<sequence>MYKPFLEFLEKELFQRFDLQSRVIPPGLEFKVSDRGRNPATIRSWCYQSQELRKIRYTYIDAGESAQIFNSVVYPSHNYDLPLLGIDFLSFGKVKNLIVLDFQPLFQDEDYQNKYIAPLKYLHNKYPDLAQNLEMKFYDANQYFSKYLLFAKTDAETVSTRVFEAFQDYLNLYWQMLADAQALHDPEDIQRIVKAQKDYDQYSADRDPASGLFSSYFGHEWAERFLHEFLFEDAVPLAVSASKR</sequence>
<proteinExistence type="inferred from homology"/>
<organism>
    <name type="scientific">Nostoc punctiforme (strain ATCC 29133 / PCC 73102)</name>
    <dbReference type="NCBI Taxonomy" id="63737"/>
    <lineage>
        <taxon>Bacteria</taxon>
        <taxon>Bacillati</taxon>
        <taxon>Cyanobacteriota</taxon>
        <taxon>Cyanophyceae</taxon>
        <taxon>Nostocales</taxon>
        <taxon>Nostocaceae</taxon>
        <taxon>Nostoc</taxon>
    </lineage>
</organism>
<name>PEBA_NOSP7</name>
<gene>
    <name type="primary">pebA</name>
    <name type="ordered locus">Npun_R0730</name>
</gene>
<keyword id="KW-0560">Oxidoreductase</keyword>
<keyword id="KW-1185">Reference proteome</keyword>
<evidence type="ECO:0000305" key="1"/>
<dbReference type="EC" id="1.3.7.2"/>
<dbReference type="EMBL" id="AF352049">
    <property type="protein sequence ID" value="AAK38598.1"/>
    <property type="status" value="ALT_INIT"/>
    <property type="molecule type" value="Genomic_DNA"/>
</dbReference>
<dbReference type="EMBL" id="CP001037">
    <property type="protein sequence ID" value="ACC79482.1"/>
    <property type="status" value="ALT_INIT"/>
    <property type="molecule type" value="Genomic_DNA"/>
</dbReference>
<dbReference type="RefSeq" id="WP_041565166.1">
    <property type="nucleotide sequence ID" value="NC_010628.1"/>
</dbReference>
<dbReference type="SMR" id="Q93TL6"/>
<dbReference type="STRING" id="63737.Npun_R0730"/>
<dbReference type="EnsemblBacteria" id="ACC79482">
    <property type="protein sequence ID" value="ACC79482"/>
    <property type="gene ID" value="Npun_R0730"/>
</dbReference>
<dbReference type="KEGG" id="npu:Npun_R0730"/>
<dbReference type="eggNOG" id="ENOG502Z8J9">
    <property type="taxonomic scope" value="Bacteria"/>
</dbReference>
<dbReference type="HOGENOM" id="CLU_086208_0_0_3"/>
<dbReference type="OrthoDB" id="421401at2"/>
<dbReference type="PhylomeDB" id="Q93TL6"/>
<dbReference type="BRENDA" id="1.3.7.2">
    <property type="organism ID" value="4370"/>
</dbReference>
<dbReference type="Proteomes" id="UP000001191">
    <property type="component" value="Chromosome"/>
</dbReference>
<dbReference type="GO" id="GO:0050617">
    <property type="term" value="F:15,16-dihydrobiliverdin:ferredoxin oxidoreductase activity"/>
    <property type="evidence" value="ECO:0007669"/>
    <property type="project" value="UniProtKB-UniRule"/>
</dbReference>
<dbReference type="GO" id="GO:0050897">
    <property type="term" value="F:cobalt ion binding"/>
    <property type="evidence" value="ECO:0007669"/>
    <property type="project" value="InterPro"/>
</dbReference>
<dbReference type="GO" id="GO:0010024">
    <property type="term" value="P:phytochromobilin biosynthetic process"/>
    <property type="evidence" value="ECO:0007669"/>
    <property type="project" value="InterPro"/>
</dbReference>
<dbReference type="Gene3D" id="3.40.1500.20">
    <property type="match status" value="1"/>
</dbReference>
<dbReference type="HAMAP" id="MF_00792">
    <property type="entry name" value="PebA"/>
    <property type="match status" value="1"/>
</dbReference>
<dbReference type="InterPro" id="IPR023658">
    <property type="entry name" value="DiHydbiliverdin_OxRdtase"/>
</dbReference>
<dbReference type="InterPro" id="IPR009249">
    <property type="entry name" value="Ferredoxin-dep_bilin_Rdtase"/>
</dbReference>
<dbReference type="NCBIfam" id="NF009720">
    <property type="entry name" value="PRK13247.1"/>
    <property type="match status" value="1"/>
</dbReference>
<dbReference type="PANTHER" id="PTHR34557">
    <property type="entry name" value="PHYTOCHROMOBILIN:FERREDOXIN OXIDOREDUCTASE, CHLOROPLASTIC"/>
    <property type="match status" value="1"/>
</dbReference>
<dbReference type="PANTHER" id="PTHR34557:SF1">
    <property type="entry name" value="PHYTOCHROMOBILIN:FERREDOXIN OXIDOREDUCTASE, CHLOROPLASTIC"/>
    <property type="match status" value="1"/>
</dbReference>
<dbReference type="Pfam" id="PF05996">
    <property type="entry name" value="Fe_bilin_red"/>
    <property type="match status" value="1"/>
</dbReference>